<accession>P78600</accession>
<keyword id="KW-0030">Aminoacyl-tRNA synthetase</keyword>
<keyword id="KW-0067">ATP-binding</keyword>
<keyword id="KW-0963">Cytoplasm</keyword>
<keyword id="KW-0436">Ligase</keyword>
<keyword id="KW-0547">Nucleotide-binding</keyword>
<keyword id="KW-0648">Protein biosynthesis</keyword>
<protein>
    <recommendedName>
        <fullName>Proline--tRNA ligase, cytoplasmic</fullName>
        <ecNumber>6.1.1.15</ecNumber>
    </recommendedName>
    <alternativeName>
        <fullName>Prolyl-tRNA synthetase</fullName>
        <shortName>ProRS</shortName>
    </alternativeName>
</protein>
<organism>
    <name type="scientific">Candida albicans</name>
    <name type="common">Yeast</name>
    <dbReference type="NCBI Taxonomy" id="5476"/>
    <lineage>
        <taxon>Eukaryota</taxon>
        <taxon>Fungi</taxon>
        <taxon>Dikarya</taxon>
        <taxon>Ascomycota</taxon>
        <taxon>Saccharomycotina</taxon>
        <taxon>Pichiomycetes</taxon>
        <taxon>Debaryomycetaceae</taxon>
        <taxon>Candida/Lodderomyces clade</taxon>
        <taxon>Candida</taxon>
    </lineage>
</organism>
<comment type="catalytic activity">
    <reaction>
        <text>tRNA(Pro) + L-proline + ATP = L-prolyl-tRNA(Pro) + AMP + diphosphate</text>
        <dbReference type="Rhea" id="RHEA:14305"/>
        <dbReference type="Rhea" id="RHEA-COMP:9700"/>
        <dbReference type="Rhea" id="RHEA-COMP:9702"/>
        <dbReference type="ChEBI" id="CHEBI:30616"/>
        <dbReference type="ChEBI" id="CHEBI:33019"/>
        <dbReference type="ChEBI" id="CHEBI:60039"/>
        <dbReference type="ChEBI" id="CHEBI:78442"/>
        <dbReference type="ChEBI" id="CHEBI:78532"/>
        <dbReference type="ChEBI" id="CHEBI:456215"/>
        <dbReference type="EC" id="6.1.1.15"/>
    </reaction>
</comment>
<comment type="subcellular location">
    <subcellularLocation>
        <location evidence="1">Cytoplasm</location>
    </subcellularLocation>
</comment>
<comment type="similarity">
    <text evidence="1">Belongs to the class-II aminoacyl-tRNA synthetase family.</text>
</comment>
<gene>
    <name type="primary">PRS</name>
</gene>
<reference key="1">
    <citation type="journal article" date="1997" name="Yeast">
        <title>Isolation of a putative prolyl-tRNA synthetase (CaPRS) gene from Candida albicans.</title>
        <authorList>
            <person name="Sentandreu M."/>
            <person name="Elorza M.V."/>
            <person name="Sentandreu R."/>
        </authorList>
    </citation>
    <scope>NUCLEOTIDE SEQUENCE [GENOMIC DNA]</scope>
    <source>
        <strain>ATCC 26555</strain>
    </source>
</reference>
<dbReference type="EC" id="6.1.1.15"/>
<dbReference type="EMBL" id="U86341">
    <property type="protein sequence ID" value="AAC49876.1"/>
    <property type="molecule type" value="Genomic_DNA"/>
</dbReference>
<dbReference type="SMR" id="P78600"/>
<dbReference type="BindingDB" id="P78600"/>
<dbReference type="ChEMBL" id="CHEMBL4636"/>
<dbReference type="VEuPathDB" id="FungiDB:CAWG_01498"/>
<dbReference type="VEuPathDB" id="FungiDB:CR_01480W_A"/>
<dbReference type="GO" id="GO:0005739">
    <property type="term" value="C:mitochondrion"/>
    <property type="evidence" value="ECO:0007669"/>
    <property type="project" value="TreeGrafter"/>
</dbReference>
<dbReference type="GO" id="GO:0005524">
    <property type="term" value="F:ATP binding"/>
    <property type="evidence" value="ECO:0007669"/>
    <property type="project" value="UniProtKB-KW"/>
</dbReference>
<dbReference type="GO" id="GO:0004827">
    <property type="term" value="F:proline-tRNA ligase activity"/>
    <property type="evidence" value="ECO:0007669"/>
    <property type="project" value="UniProtKB-EC"/>
</dbReference>
<dbReference type="GO" id="GO:0006433">
    <property type="term" value="P:prolyl-tRNA aminoacylation"/>
    <property type="evidence" value="ECO:0007669"/>
    <property type="project" value="InterPro"/>
</dbReference>
<dbReference type="CDD" id="cd00779">
    <property type="entry name" value="ProRS_core_prok"/>
    <property type="match status" value="1"/>
</dbReference>
<dbReference type="Gene3D" id="3.40.50.800">
    <property type="entry name" value="Anticodon-binding domain"/>
    <property type="match status" value="1"/>
</dbReference>
<dbReference type="Gene3D" id="3.30.930.10">
    <property type="entry name" value="Bira Bifunctional Protein, Domain 2"/>
    <property type="match status" value="2"/>
</dbReference>
<dbReference type="InterPro" id="IPR002314">
    <property type="entry name" value="aa-tRNA-synt_IIb"/>
</dbReference>
<dbReference type="InterPro" id="IPR006195">
    <property type="entry name" value="aa-tRNA-synth_II"/>
</dbReference>
<dbReference type="InterPro" id="IPR045864">
    <property type="entry name" value="aa-tRNA-synth_II/BPL/LPL"/>
</dbReference>
<dbReference type="InterPro" id="IPR004154">
    <property type="entry name" value="Anticodon-bd"/>
</dbReference>
<dbReference type="InterPro" id="IPR036621">
    <property type="entry name" value="Anticodon-bd_dom_sf"/>
</dbReference>
<dbReference type="InterPro" id="IPR002316">
    <property type="entry name" value="Pro-tRNA-ligase_IIa"/>
</dbReference>
<dbReference type="InterPro" id="IPR050062">
    <property type="entry name" value="Pro-tRNA_synthetase"/>
</dbReference>
<dbReference type="InterPro" id="IPR033730">
    <property type="entry name" value="ProRS_core_prok"/>
</dbReference>
<dbReference type="PANTHER" id="PTHR42753">
    <property type="entry name" value="MITOCHONDRIAL RIBOSOME PROTEIN L39/PROLYL-TRNA LIGASE FAMILY MEMBER"/>
    <property type="match status" value="1"/>
</dbReference>
<dbReference type="PANTHER" id="PTHR42753:SF2">
    <property type="entry name" value="PROLINE--TRNA LIGASE"/>
    <property type="match status" value="1"/>
</dbReference>
<dbReference type="Pfam" id="PF03129">
    <property type="entry name" value="HGTP_anticodon"/>
    <property type="match status" value="1"/>
</dbReference>
<dbReference type="Pfam" id="PF00587">
    <property type="entry name" value="tRNA-synt_2b"/>
    <property type="match status" value="1"/>
</dbReference>
<dbReference type="PRINTS" id="PR01046">
    <property type="entry name" value="TRNASYNTHPRO"/>
</dbReference>
<dbReference type="SUPFAM" id="SSF52954">
    <property type="entry name" value="Class II aaRS ABD-related"/>
    <property type="match status" value="1"/>
</dbReference>
<dbReference type="SUPFAM" id="SSF55681">
    <property type="entry name" value="Class II aaRS and biotin synthetases"/>
    <property type="match status" value="1"/>
</dbReference>
<dbReference type="PROSITE" id="PS50862">
    <property type="entry name" value="AA_TRNA_LIGASE_II"/>
    <property type="match status" value="1"/>
</dbReference>
<proteinExistence type="inferred from homology"/>
<name>SYPC_CANAX</name>
<feature type="chain" id="PRO_0000139353" description="Proline--tRNA ligase, cytoplasmic">
    <location>
        <begin position="1"/>
        <end position="575"/>
    </location>
</feature>
<sequence length="575" mass="66209">MIIIKRFLHIKTVPKSYGNQLSKFKYSKQIPTHEVLTKLGYITYPRAGLVNWSKMGLLIQNKISQIIRQRMDEIQFEEVSLSLISHKELWKLTNRWDQEEIFKLVGDEYLLVPTAEEEITNYVKKQFLESYKNFPLALYQINPKFRNEKRPRGGLLRGKEFLMKDAYSFDLNESEAMKTYEKVVGAYHKIFQDLGIPYVKAEADSGDIGGSLSHEWHYLNSSGEDTVFECNECHNVSNMEKALSYPKEIDETIEVSVIYFTTEDKSTLICAYYPSNRVLEPKFIQNEIPDIDLDSINDLSEFNHDISTRIVRIMDSRLSSRSKFPDFPISNFINRSLITTLTDIPIVLAQEGEICGHCEEGKLSASSAIEVGHTFYLGDKYSKPLDLEVDVPTSNNSIEKQRIMMGCYGIGISRIIAAIAEINRDEKGLKWPRSIAPWEVTVVEVSKQKQLKNVNDNNHHNNPQDNFQEIYNILNQANIDYRLDNRSDSMGKKLKQSDLLGIPLSIILGNQYPIIEIEVRGNKKNNNNNSWLQSYTENKDQFDWKVETDAQGNDTKHYIHKDGLVTVVNSLLNDM</sequence>
<evidence type="ECO:0000305" key="1"/>